<keyword id="KW-1003">Cell membrane</keyword>
<keyword id="KW-0472">Membrane</keyword>
<keyword id="KW-0808">Transferase</keyword>
<keyword id="KW-0812">Transmembrane</keyword>
<keyword id="KW-1133">Transmembrane helix</keyword>
<gene>
    <name evidence="1" type="primary">lgt</name>
    <name type="ordered locus">SPT_0862</name>
</gene>
<proteinExistence type="inferred from homology"/>
<feature type="chain" id="PRO_1000164155" description="Phosphatidylglycerol--prolipoprotein diacylglyceryl transferase">
    <location>
        <begin position="1"/>
        <end position="262"/>
    </location>
</feature>
<feature type="transmembrane region" description="Helical" evidence="1">
    <location>
        <begin position="9"/>
        <end position="29"/>
    </location>
</feature>
<feature type="transmembrane region" description="Helical" evidence="1">
    <location>
        <begin position="41"/>
        <end position="61"/>
    </location>
</feature>
<feature type="transmembrane region" description="Helical" evidence="1">
    <location>
        <begin position="80"/>
        <end position="100"/>
    </location>
</feature>
<feature type="transmembrane region" description="Helical" evidence="1">
    <location>
        <begin position="109"/>
        <end position="129"/>
    </location>
</feature>
<feature type="transmembrane region" description="Helical" evidence="1">
    <location>
        <begin position="167"/>
        <end position="187"/>
    </location>
</feature>
<feature type="transmembrane region" description="Helical" evidence="1">
    <location>
        <begin position="197"/>
        <end position="217"/>
    </location>
</feature>
<feature type="transmembrane region" description="Helical" evidence="1">
    <location>
        <begin position="226"/>
        <end position="246"/>
    </location>
</feature>
<feature type="binding site" evidence="1">
    <location>
        <position position="131"/>
    </location>
    <ligand>
        <name>a 1,2-diacyl-sn-glycero-3-phospho-(1'-sn-glycerol)</name>
        <dbReference type="ChEBI" id="CHEBI:64716"/>
    </ligand>
</feature>
<protein>
    <recommendedName>
        <fullName evidence="1">Phosphatidylglycerol--prolipoprotein diacylglyceryl transferase</fullName>
        <ecNumber evidence="1">2.5.1.145</ecNumber>
    </recommendedName>
</protein>
<comment type="function">
    <text evidence="1">Catalyzes the transfer of the diacylglyceryl group from phosphatidylglycerol to the sulfhydryl group of the N-terminal cysteine of a prolipoprotein, the first step in the formation of mature lipoproteins.</text>
</comment>
<comment type="catalytic activity">
    <reaction evidence="1">
        <text>L-cysteinyl-[prolipoprotein] + a 1,2-diacyl-sn-glycero-3-phospho-(1'-sn-glycerol) = an S-1,2-diacyl-sn-glyceryl-L-cysteinyl-[prolipoprotein] + sn-glycerol 1-phosphate + H(+)</text>
        <dbReference type="Rhea" id="RHEA:56712"/>
        <dbReference type="Rhea" id="RHEA-COMP:14679"/>
        <dbReference type="Rhea" id="RHEA-COMP:14680"/>
        <dbReference type="ChEBI" id="CHEBI:15378"/>
        <dbReference type="ChEBI" id="CHEBI:29950"/>
        <dbReference type="ChEBI" id="CHEBI:57685"/>
        <dbReference type="ChEBI" id="CHEBI:64716"/>
        <dbReference type="ChEBI" id="CHEBI:140658"/>
        <dbReference type="EC" id="2.5.1.145"/>
    </reaction>
</comment>
<comment type="pathway">
    <text evidence="1">Protein modification; lipoprotein biosynthesis (diacylglyceryl transfer).</text>
</comment>
<comment type="subcellular location">
    <subcellularLocation>
        <location evidence="1">Cell membrane</location>
        <topology evidence="1">Multi-pass membrane protein</topology>
    </subcellularLocation>
</comment>
<comment type="similarity">
    <text evidence="1">Belongs to the Lgt family.</text>
</comment>
<reference key="1">
    <citation type="journal article" date="2010" name="Genome Biol.">
        <title>Structure and dynamics of the pan-genome of Streptococcus pneumoniae and closely related species.</title>
        <authorList>
            <person name="Donati C."/>
            <person name="Hiller N.L."/>
            <person name="Tettelin H."/>
            <person name="Muzzi A."/>
            <person name="Croucher N.J."/>
            <person name="Angiuoli S.V."/>
            <person name="Oggioni M."/>
            <person name="Dunning Hotopp J.C."/>
            <person name="Hu F.Z."/>
            <person name="Riley D.R."/>
            <person name="Covacci A."/>
            <person name="Mitchell T.J."/>
            <person name="Bentley S.D."/>
            <person name="Kilian M."/>
            <person name="Ehrlich G.D."/>
            <person name="Rappuoli R."/>
            <person name="Moxon E.R."/>
            <person name="Masignani V."/>
        </authorList>
    </citation>
    <scope>NUCLEOTIDE SEQUENCE [LARGE SCALE GENOMIC DNA]</scope>
    <source>
        <strain>Taiwan19F-14</strain>
    </source>
</reference>
<organism>
    <name type="scientific">Streptococcus pneumoniae (strain Taiwan19F-14)</name>
    <dbReference type="NCBI Taxonomy" id="487213"/>
    <lineage>
        <taxon>Bacteria</taxon>
        <taxon>Bacillati</taxon>
        <taxon>Bacillota</taxon>
        <taxon>Bacilli</taxon>
        <taxon>Lactobacillales</taxon>
        <taxon>Streptococcaceae</taxon>
        <taxon>Streptococcus</taxon>
    </lineage>
</organism>
<dbReference type="EC" id="2.5.1.145" evidence="1"/>
<dbReference type="EMBL" id="CP000921">
    <property type="protein sequence ID" value="ACO23644.1"/>
    <property type="molecule type" value="Genomic_DNA"/>
</dbReference>
<dbReference type="RefSeq" id="WP_000886662.1">
    <property type="nucleotide sequence ID" value="NC_012469.1"/>
</dbReference>
<dbReference type="SMR" id="C1CQU5"/>
<dbReference type="KEGG" id="snt:SPT_0862"/>
<dbReference type="HOGENOM" id="CLU_013386_0_1_9"/>
<dbReference type="UniPathway" id="UPA00664"/>
<dbReference type="GO" id="GO:0005886">
    <property type="term" value="C:plasma membrane"/>
    <property type="evidence" value="ECO:0007669"/>
    <property type="project" value="UniProtKB-SubCell"/>
</dbReference>
<dbReference type="GO" id="GO:0008961">
    <property type="term" value="F:phosphatidylglycerol-prolipoprotein diacylglyceryl transferase activity"/>
    <property type="evidence" value="ECO:0007669"/>
    <property type="project" value="UniProtKB-UniRule"/>
</dbReference>
<dbReference type="GO" id="GO:0042158">
    <property type="term" value="P:lipoprotein biosynthetic process"/>
    <property type="evidence" value="ECO:0007669"/>
    <property type="project" value="UniProtKB-UniRule"/>
</dbReference>
<dbReference type="HAMAP" id="MF_01147">
    <property type="entry name" value="Lgt"/>
    <property type="match status" value="1"/>
</dbReference>
<dbReference type="InterPro" id="IPR001640">
    <property type="entry name" value="Lgt"/>
</dbReference>
<dbReference type="NCBIfam" id="TIGR00544">
    <property type="entry name" value="lgt"/>
    <property type="match status" value="1"/>
</dbReference>
<dbReference type="PANTHER" id="PTHR30589:SF0">
    <property type="entry name" value="PHOSPHATIDYLGLYCEROL--PROLIPOPROTEIN DIACYLGLYCERYL TRANSFERASE"/>
    <property type="match status" value="1"/>
</dbReference>
<dbReference type="PANTHER" id="PTHR30589">
    <property type="entry name" value="PROLIPOPROTEIN DIACYLGLYCERYL TRANSFERASE"/>
    <property type="match status" value="1"/>
</dbReference>
<dbReference type="Pfam" id="PF01790">
    <property type="entry name" value="LGT"/>
    <property type="match status" value="1"/>
</dbReference>
<dbReference type="PROSITE" id="PS01311">
    <property type="entry name" value="LGT"/>
    <property type="match status" value="1"/>
</dbReference>
<name>LGT_STRZT</name>
<sequence>MLDPIAIQLGPLAIRWYALCIVTGLILAVYLTMKEAPRKKIIPDDILDFILVAFPLAILGARLYYVIFRFDYYSQNLGEIFAIWNGGLAIYGGLITGALVLYIFADRKLINTWDFLDIAAPSVMIAQSLGRWGNFFNQEAYGATVDNLDYLPGFIRDQMYIEGSYRQPTFLYESLWNLLGFALILIFRRKWKSLRRGHITAFYLIWYGFGRMVIEGMRTDSLMFFGLRVSQWLSVVFIGLGIMIVIYQNRKKAPYYITEEEN</sequence>
<evidence type="ECO:0000255" key="1">
    <source>
        <dbReference type="HAMAP-Rule" id="MF_01147"/>
    </source>
</evidence>
<accession>C1CQU5</accession>